<evidence type="ECO:0000250" key="1"/>
<evidence type="ECO:0000305" key="2"/>
<gene>
    <name type="ordered locus">YDL086W</name>
</gene>
<organism>
    <name type="scientific">Saccharomyces cerevisiae (strain ATCC 204508 / S288c)</name>
    <name type="common">Baker's yeast</name>
    <dbReference type="NCBI Taxonomy" id="559292"/>
    <lineage>
        <taxon>Eukaryota</taxon>
        <taxon>Fungi</taxon>
        <taxon>Dikarya</taxon>
        <taxon>Ascomycota</taxon>
        <taxon>Saccharomycotina</taxon>
        <taxon>Saccharomycetes</taxon>
        <taxon>Saccharomycetales</taxon>
        <taxon>Saccharomycetaceae</taxon>
        <taxon>Saccharomyces</taxon>
    </lineage>
</organism>
<dbReference type="EC" id="3.1.1.45"/>
<dbReference type="EMBL" id="Z74134">
    <property type="protein sequence ID" value="CAA98652.1"/>
    <property type="molecule type" value="Genomic_DNA"/>
</dbReference>
<dbReference type="EMBL" id="BK006938">
    <property type="protein sequence ID" value="DAA11772.1"/>
    <property type="molecule type" value="Genomic_DNA"/>
</dbReference>
<dbReference type="PIR" id="S67622">
    <property type="entry name" value="S67622"/>
</dbReference>
<dbReference type="RefSeq" id="NP_010197.1">
    <property type="nucleotide sequence ID" value="NM_001180145.1"/>
</dbReference>
<dbReference type="SMR" id="Q07505"/>
<dbReference type="BioGRID" id="31974">
    <property type="interactions" value="55"/>
</dbReference>
<dbReference type="DIP" id="DIP-3879N"/>
<dbReference type="FunCoup" id="Q07505">
    <property type="interactions" value="64"/>
</dbReference>
<dbReference type="IntAct" id="Q07505">
    <property type="interactions" value="8"/>
</dbReference>
<dbReference type="MINT" id="Q07505"/>
<dbReference type="STRING" id="4932.YDL086W"/>
<dbReference type="ESTHER" id="yeast-dlhh">
    <property type="family name" value="Dienelactone_hydrolase"/>
</dbReference>
<dbReference type="iPTMnet" id="Q07505"/>
<dbReference type="PaxDb" id="4932-YDL086W"/>
<dbReference type="PeptideAtlas" id="Q07505"/>
<dbReference type="EnsemblFungi" id="YDL086W_mRNA">
    <property type="protein sequence ID" value="YDL086W"/>
    <property type="gene ID" value="YDL086W"/>
</dbReference>
<dbReference type="GeneID" id="851472"/>
<dbReference type="KEGG" id="sce:YDL086W"/>
<dbReference type="AGR" id="SGD:S000002244"/>
<dbReference type="SGD" id="S000002244">
    <property type="gene designation" value="YDL086W"/>
</dbReference>
<dbReference type="VEuPathDB" id="FungiDB:YDL086W"/>
<dbReference type="eggNOG" id="ENOG502QQFN">
    <property type="taxonomic scope" value="Eukaryota"/>
</dbReference>
<dbReference type="HOGENOM" id="CLU_054590_1_0_1"/>
<dbReference type="InParanoid" id="Q07505"/>
<dbReference type="OMA" id="CATCFFP"/>
<dbReference type="OrthoDB" id="58297at2759"/>
<dbReference type="BioCyc" id="YEAST:YDL086W-MONOMER"/>
<dbReference type="BioGRID-ORCS" id="851472">
    <property type="hits" value="0 hits in 10 CRISPR screens"/>
</dbReference>
<dbReference type="CD-CODE" id="E03F929F">
    <property type="entry name" value="Stress granule"/>
</dbReference>
<dbReference type="PRO" id="PR:Q07505"/>
<dbReference type="Proteomes" id="UP000002311">
    <property type="component" value="Chromosome IV"/>
</dbReference>
<dbReference type="RNAct" id="Q07505">
    <property type="molecule type" value="protein"/>
</dbReference>
<dbReference type="GO" id="GO:0005737">
    <property type="term" value="C:cytoplasm"/>
    <property type="evidence" value="ECO:0007005"/>
    <property type="project" value="SGD"/>
</dbReference>
<dbReference type="GO" id="GO:0005739">
    <property type="term" value="C:mitochondrion"/>
    <property type="evidence" value="ECO:0007005"/>
    <property type="project" value="SGD"/>
</dbReference>
<dbReference type="GO" id="GO:0008806">
    <property type="term" value="F:carboxymethylenebutenolidase activity"/>
    <property type="evidence" value="ECO:0007669"/>
    <property type="project" value="UniProtKB-EC"/>
</dbReference>
<dbReference type="FunFam" id="3.40.50.1820:FF:000286">
    <property type="entry name" value="YDL086W-like protein"/>
    <property type="match status" value="1"/>
</dbReference>
<dbReference type="Gene3D" id="3.40.50.1820">
    <property type="entry name" value="alpha/beta hydrolase"/>
    <property type="match status" value="1"/>
</dbReference>
<dbReference type="InterPro" id="IPR029058">
    <property type="entry name" value="AB_hydrolase_fold"/>
</dbReference>
<dbReference type="InterPro" id="IPR002925">
    <property type="entry name" value="Dienelactn_hydro"/>
</dbReference>
<dbReference type="PANTHER" id="PTHR47562">
    <property type="match status" value="1"/>
</dbReference>
<dbReference type="PANTHER" id="PTHR47562:SF2">
    <property type="entry name" value="CARBOXYMETHYLENEBUTENOLIDASE-RELATED"/>
    <property type="match status" value="1"/>
</dbReference>
<dbReference type="Pfam" id="PF01738">
    <property type="entry name" value="DLH"/>
    <property type="match status" value="1"/>
</dbReference>
<dbReference type="SUPFAM" id="SSF53474">
    <property type="entry name" value="alpha/beta-Hydrolases"/>
    <property type="match status" value="1"/>
</dbReference>
<accession>Q07505</accession>
<accession>D6VRR2</accession>
<sequence>MLITETFHDVQTSYGTTLRIYVYSPKIAGYPQAKFPGVILYSEIYQVTGPVRRFGQRIASEGYVVVAPAIYHNFMGPEALPYDVQGTDIGNEYKIKKPLESYDEDNKLCCDLLFQLPQFDGKRIGSTGMCLGGHLAFRALLDKRVTCATCFFPTDIHSRTLGLGQNDNSLERVSKELGNNQEMVLIFGTADTHVDPQGRDLIRKTLRDHGVKFTFLEILAAQHAFIRDEFSKGRFDSAITQSCLGFLFEQFNRKLRIDLGEFVDDNTPLEHVC</sequence>
<keyword id="KW-0378">Hydrolase</keyword>
<keyword id="KW-1185">Reference proteome</keyword>
<reference key="1">
    <citation type="journal article" date="1997" name="Nature">
        <title>The nucleotide sequence of Saccharomyces cerevisiae chromosome IV.</title>
        <authorList>
            <person name="Jacq C."/>
            <person name="Alt-Moerbe J."/>
            <person name="Andre B."/>
            <person name="Arnold W."/>
            <person name="Bahr A."/>
            <person name="Ballesta J.P.G."/>
            <person name="Bargues M."/>
            <person name="Baron L."/>
            <person name="Becker A."/>
            <person name="Biteau N."/>
            <person name="Bloecker H."/>
            <person name="Blugeon C."/>
            <person name="Boskovic J."/>
            <person name="Brandt P."/>
            <person name="Brueckner M."/>
            <person name="Buitrago M.J."/>
            <person name="Coster F."/>
            <person name="Delaveau T."/>
            <person name="del Rey F."/>
            <person name="Dujon B."/>
            <person name="Eide L.G."/>
            <person name="Garcia-Cantalejo J.M."/>
            <person name="Goffeau A."/>
            <person name="Gomez-Peris A."/>
            <person name="Granotier C."/>
            <person name="Hanemann V."/>
            <person name="Hankeln T."/>
            <person name="Hoheisel J.D."/>
            <person name="Jaeger W."/>
            <person name="Jimenez A."/>
            <person name="Jonniaux J.-L."/>
            <person name="Kraemer C."/>
            <person name="Kuester H."/>
            <person name="Laamanen P."/>
            <person name="Legros Y."/>
            <person name="Louis E.J."/>
            <person name="Moeller-Rieker S."/>
            <person name="Monnet A."/>
            <person name="Moro M."/>
            <person name="Mueller-Auer S."/>
            <person name="Nussbaumer B."/>
            <person name="Paricio N."/>
            <person name="Paulin L."/>
            <person name="Perea J."/>
            <person name="Perez-Alonso M."/>
            <person name="Perez-Ortin J.E."/>
            <person name="Pohl T.M."/>
            <person name="Prydz H."/>
            <person name="Purnelle B."/>
            <person name="Rasmussen S.W."/>
            <person name="Remacha M.A."/>
            <person name="Revuelta J.L."/>
            <person name="Rieger M."/>
            <person name="Salom D."/>
            <person name="Saluz H.P."/>
            <person name="Saiz J.E."/>
            <person name="Saren A.-M."/>
            <person name="Schaefer M."/>
            <person name="Scharfe M."/>
            <person name="Schmidt E.R."/>
            <person name="Schneider C."/>
            <person name="Scholler P."/>
            <person name="Schwarz S."/>
            <person name="Soler-Mira A."/>
            <person name="Urrestarazu L.A."/>
            <person name="Verhasselt P."/>
            <person name="Vissers S."/>
            <person name="Voet M."/>
            <person name="Volckaert G."/>
            <person name="Wagner G."/>
            <person name="Wambutt R."/>
            <person name="Wedler E."/>
            <person name="Wedler H."/>
            <person name="Woelfl S."/>
            <person name="Harris D.E."/>
            <person name="Bowman S."/>
            <person name="Brown D."/>
            <person name="Churcher C.M."/>
            <person name="Connor R."/>
            <person name="Dedman K."/>
            <person name="Gentles S."/>
            <person name="Hamlin N."/>
            <person name="Hunt S."/>
            <person name="Jones L."/>
            <person name="McDonald S."/>
            <person name="Murphy L.D."/>
            <person name="Niblett D."/>
            <person name="Odell C."/>
            <person name="Oliver K."/>
            <person name="Rajandream M.A."/>
            <person name="Richards C."/>
            <person name="Shore L."/>
            <person name="Walsh S.V."/>
            <person name="Barrell B.G."/>
            <person name="Dietrich F.S."/>
            <person name="Mulligan J.T."/>
            <person name="Allen E."/>
            <person name="Araujo R."/>
            <person name="Aviles E."/>
            <person name="Berno A."/>
            <person name="Carpenter J."/>
            <person name="Chen E."/>
            <person name="Cherry J.M."/>
            <person name="Chung E."/>
            <person name="Duncan M."/>
            <person name="Hunicke-Smith S."/>
            <person name="Hyman R.W."/>
            <person name="Komp C."/>
            <person name="Lashkari D."/>
            <person name="Lew H."/>
            <person name="Lin D."/>
            <person name="Mosedale D."/>
            <person name="Nakahara K."/>
            <person name="Namath A."/>
            <person name="Oefner P."/>
            <person name="Oh C."/>
            <person name="Petel F.X."/>
            <person name="Roberts D."/>
            <person name="Schramm S."/>
            <person name="Schroeder M."/>
            <person name="Shogren T."/>
            <person name="Shroff N."/>
            <person name="Winant A."/>
            <person name="Yelton M.A."/>
            <person name="Botstein D."/>
            <person name="Davis R.W."/>
            <person name="Johnston M."/>
            <person name="Andrews S."/>
            <person name="Brinkman R."/>
            <person name="Cooper J."/>
            <person name="Ding H."/>
            <person name="Du Z."/>
            <person name="Favello A."/>
            <person name="Fulton L."/>
            <person name="Gattung S."/>
            <person name="Greco T."/>
            <person name="Hallsworth K."/>
            <person name="Hawkins J."/>
            <person name="Hillier L.W."/>
            <person name="Jier M."/>
            <person name="Johnson D."/>
            <person name="Johnston L."/>
            <person name="Kirsten J."/>
            <person name="Kucaba T."/>
            <person name="Langston Y."/>
            <person name="Latreille P."/>
            <person name="Le T."/>
            <person name="Mardis E."/>
            <person name="Menezes S."/>
            <person name="Miller N."/>
            <person name="Nhan M."/>
            <person name="Pauley A."/>
            <person name="Peluso D."/>
            <person name="Rifkin L."/>
            <person name="Riles L."/>
            <person name="Taich A."/>
            <person name="Trevaskis E."/>
            <person name="Vignati D."/>
            <person name="Wilcox L."/>
            <person name="Wohldman P."/>
            <person name="Vaudin M."/>
            <person name="Wilson R."/>
            <person name="Waterston R."/>
            <person name="Albermann K."/>
            <person name="Hani J."/>
            <person name="Heumann K."/>
            <person name="Kleine K."/>
            <person name="Mewes H.-W."/>
            <person name="Zollner A."/>
            <person name="Zaccaria P."/>
        </authorList>
    </citation>
    <scope>NUCLEOTIDE SEQUENCE [LARGE SCALE GENOMIC DNA]</scope>
    <source>
        <strain>ATCC 204508 / S288c</strain>
    </source>
</reference>
<reference key="2">
    <citation type="journal article" date="2014" name="G3 (Bethesda)">
        <title>The reference genome sequence of Saccharomyces cerevisiae: Then and now.</title>
        <authorList>
            <person name="Engel S.R."/>
            <person name="Dietrich F.S."/>
            <person name="Fisk D.G."/>
            <person name="Binkley G."/>
            <person name="Balakrishnan R."/>
            <person name="Costanzo M.C."/>
            <person name="Dwight S.S."/>
            <person name="Hitz B.C."/>
            <person name="Karra K."/>
            <person name="Nash R.S."/>
            <person name="Weng S."/>
            <person name="Wong E.D."/>
            <person name="Lloyd P."/>
            <person name="Skrzypek M.S."/>
            <person name="Miyasato S.R."/>
            <person name="Simison M."/>
            <person name="Cherry J.M."/>
        </authorList>
    </citation>
    <scope>GENOME REANNOTATION</scope>
    <source>
        <strain>ATCC 204508 / S288c</strain>
    </source>
</reference>
<reference key="3">
    <citation type="journal article" date="2012" name="Proc. Natl. Acad. Sci. U.S.A.">
        <title>N-terminal acetylome analyses and functional insights of the N-terminal acetyltransferase NatB.</title>
        <authorList>
            <person name="Van Damme P."/>
            <person name="Lasa M."/>
            <person name="Polevoda B."/>
            <person name="Gazquez C."/>
            <person name="Elosegui-Artola A."/>
            <person name="Kim D.S."/>
            <person name="De Juan-Pardo E."/>
            <person name="Demeyer K."/>
            <person name="Hole K."/>
            <person name="Larrea E."/>
            <person name="Timmerman E."/>
            <person name="Prieto J."/>
            <person name="Arnesen T."/>
            <person name="Sherman F."/>
            <person name="Gevaert K."/>
            <person name="Aldabe R."/>
        </authorList>
    </citation>
    <scope>IDENTIFICATION BY MASS SPECTROMETRY [LARGE SCALE ANALYSIS]</scope>
</reference>
<name>DLHH_YEAST</name>
<protein>
    <recommendedName>
        <fullName>Putative carboxymethylenebutenolidase</fullName>
        <ecNumber>3.1.1.45</ecNumber>
    </recommendedName>
    <alternativeName>
        <fullName>Dienelactone hydrolase</fullName>
        <shortName>DLH</shortName>
    </alternativeName>
</protein>
<proteinExistence type="evidence at protein level"/>
<feature type="chain" id="PRO_0000161585" description="Putative carboxymethylenebutenolidase">
    <location>
        <begin position="1"/>
        <end position="273"/>
    </location>
</feature>
<feature type="active site" evidence="1">
    <location>
        <position position="130"/>
    </location>
</feature>
<feature type="active site" evidence="1">
    <location>
        <position position="191"/>
    </location>
</feature>
<feature type="active site" evidence="1">
    <location>
        <position position="223"/>
    </location>
</feature>
<comment type="catalytic activity">
    <reaction>
        <text>2-(5-oxo-2,5-dihydrofuran-2-ylidene)acetate + H2O = 4-oxohex-2-enedioate + H(+)</text>
        <dbReference type="Rhea" id="RHEA:12372"/>
        <dbReference type="ChEBI" id="CHEBI:12040"/>
        <dbReference type="ChEBI" id="CHEBI:15377"/>
        <dbReference type="ChEBI" id="CHEBI:15378"/>
        <dbReference type="ChEBI" id="CHEBI:57263"/>
        <dbReference type="EC" id="3.1.1.45"/>
    </reaction>
</comment>
<comment type="interaction">
    <interactant intactId="EBI-5951">
        <id>Q07505</id>
    </interactant>
    <interactant intactId="EBI-701">
        <id>P33203</id>
        <label>PRP40</label>
    </interactant>
    <organismsDiffer>false</organismsDiffer>
    <experiments>2</experiments>
</comment>
<comment type="similarity">
    <text evidence="2">Belongs to the dienelactone hydrolase family.</text>
</comment>